<reference key="1">
    <citation type="journal article" date="2005" name="Nature">
        <title>Genome sequencing and analysis of Aspergillus oryzae.</title>
        <authorList>
            <person name="Machida M."/>
            <person name="Asai K."/>
            <person name="Sano M."/>
            <person name="Tanaka T."/>
            <person name="Kumagai T."/>
            <person name="Terai G."/>
            <person name="Kusumoto K."/>
            <person name="Arima T."/>
            <person name="Akita O."/>
            <person name="Kashiwagi Y."/>
            <person name="Abe K."/>
            <person name="Gomi K."/>
            <person name="Horiuchi H."/>
            <person name="Kitamoto K."/>
            <person name="Kobayashi T."/>
            <person name="Takeuchi M."/>
            <person name="Denning D.W."/>
            <person name="Galagan J.E."/>
            <person name="Nierman W.C."/>
            <person name="Yu J."/>
            <person name="Archer D.B."/>
            <person name="Bennett J.W."/>
            <person name="Bhatnagar D."/>
            <person name="Cleveland T.E."/>
            <person name="Fedorova N.D."/>
            <person name="Gotoh O."/>
            <person name="Horikawa H."/>
            <person name="Hosoyama A."/>
            <person name="Ichinomiya M."/>
            <person name="Igarashi R."/>
            <person name="Iwashita K."/>
            <person name="Juvvadi P.R."/>
            <person name="Kato M."/>
            <person name="Kato Y."/>
            <person name="Kin T."/>
            <person name="Kokubun A."/>
            <person name="Maeda H."/>
            <person name="Maeyama N."/>
            <person name="Maruyama J."/>
            <person name="Nagasaki H."/>
            <person name="Nakajima T."/>
            <person name="Oda K."/>
            <person name="Okada K."/>
            <person name="Paulsen I."/>
            <person name="Sakamoto K."/>
            <person name="Sawano T."/>
            <person name="Takahashi M."/>
            <person name="Takase K."/>
            <person name="Terabayashi Y."/>
            <person name="Wortman J.R."/>
            <person name="Yamada O."/>
            <person name="Yamagata Y."/>
            <person name="Anazawa H."/>
            <person name="Hata Y."/>
            <person name="Koide Y."/>
            <person name="Komori T."/>
            <person name="Koyama Y."/>
            <person name="Minetoki T."/>
            <person name="Suharnan S."/>
            <person name="Tanaka A."/>
            <person name="Isono K."/>
            <person name="Kuhara S."/>
            <person name="Ogasawara N."/>
            <person name="Kikuchi H."/>
        </authorList>
    </citation>
    <scope>NUCLEOTIDE SEQUENCE [LARGE SCALE GENOMIC DNA]</scope>
    <source>
        <strain>ATCC 42149 / RIB 40</strain>
    </source>
</reference>
<reference key="2">
    <citation type="journal article" date="2014" name="Angew. Chem. Int. Ed.">
        <title>Biosynthesis of the halogenated mycotoxin aspirochlorine in koji mold involves a cryptic amino acid conversion.</title>
        <authorList>
            <person name="Chankhamjon P."/>
            <person name="Boettger-Schmidt D."/>
            <person name="Scherlach K."/>
            <person name="Urbansky B."/>
            <person name="Lackner G."/>
            <person name="Kalb D."/>
            <person name="Dahse H.M."/>
            <person name="Hoffmeister D."/>
            <person name="Hertweck C."/>
        </authorList>
    </citation>
    <scope>FUNCTION</scope>
    <scope>PATHWAY</scope>
</reference>
<organism>
    <name type="scientific">Aspergillus oryzae (strain ATCC 42149 / RIB 40)</name>
    <name type="common">Yellow koji mold</name>
    <dbReference type="NCBI Taxonomy" id="510516"/>
    <lineage>
        <taxon>Eukaryota</taxon>
        <taxon>Fungi</taxon>
        <taxon>Dikarya</taxon>
        <taxon>Ascomycota</taxon>
        <taxon>Pezizomycotina</taxon>
        <taxon>Eurotiomycetes</taxon>
        <taxon>Eurotiomycetidae</taxon>
        <taxon>Eurotiales</taxon>
        <taxon>Aspergillaceae</taxon>
        <taxon>Aspergillus</taxon>
        <taxon>Aspergillus subgen. Circumdati</taxon>
    </lineage>
</organism>
<evidence type="ECO:0000250" key="1">
    <source>
        <dbReference type="UniProtKB" id="P04798"/>
    </source>
</evidence>
<evidence type="ECO:0000255" key="2"/>
<evidence type="ECO:0000255" key="3">
    <source>
        <dbReference type="PROSITE-ProRule" id="PRU00498"/>
    </source>
</evidence>
<evidence type="ECO:0000269" key="4">
    <source>
    </source>
</evidence>
<evidence type="ECO:0000303" key="5">
    <source>
    </source>
</evidence>
<evidence type="ECO:0000305" key="6"/>
<evidence type="ECO:0000305" key="7">
    <source>
    </source>
</evidence>
<keyword id="KW-0325">Glycoprotein</keyword>
<keyword id="KW-0349">Heme</keyword>
<keyword id="KW-0408">Iron</keyword>
<keyword id="KW-0472">Membrane</keyword>
<keyword id="KW-0479">Metal-binding</keyword>
<keyword id="KW-0503">Monooxygenase</keyword>
<keyword id="KW-0560">Oxidoreductase</keyword>
<keyword id="KW-1185">Reference proteome</keyword>
<keyword id="KW-0812">Transmembrane</keyword>
<keyword id="KW-1133">Transmembrane helix</keyword>
<proteinExistence type="inferred from homology"/>
<name>ACLL_ASPOR</name>
<dbReference type="EC" id="1.-.-.-" evidence="7"/>
<dbReference type="EMBL" id="BA000050">
    <property type="protein sequence ID" value="BAE56591.1"/>
    <property type="molecule type" value="Genomic_DNA"/>
</dbReference>
<dbReference type="SMR" id="Q2UPC4"/>
<dbReference type="STRING" id="510516.Q2UPC4"/>
<dbReference type="GlyCosmos" id="Q2UPC4">
    <property type="glycosylation" value="1 site, No reported glycans"/>
</dbReference>
<dbReference type="EnsemblFungi" id="BAE56591">
    <property type="protein sequence ID" value="BAE56591"/>
    <property type="gene ID" value="AO090001000028"/>
</dbReference>
<dbReference type="VEuPathDB" id="FungiDB:AO090001000028"/>
<dbReference type="HOGENOM" id="CLU_001570_14_11_1"/>
<dbReference type="OMA" id="EESKDWH"/>
<dbReference type="Proteomes" id="UP000006564">
    <property type="component" value="Chromosome 2"/>
</dbReference>
<dbReference type="GO" id="GO:0016020">
    <property type="term" value="C:membrane"/>
    <property type="evidence" value="ECO:0007669"/>
    <property type="project" value="UniProtKB-SubCell"/>
</dbReference>
<dbReference type="GO" id="GO:0020037">
    <property type="term" value="F:heme binding"/>
    <property type="evidence" value="ECO:0007669"/>
    <property type="project" value="InterPro"/>
</dbReference>
<dbReference type="GO" id="GO:0005506">
    <property type="term" value="F:iron ion binding"/>
    <property type="evidence" value="ECO:0007669"/>
    <property type="project" value="InterPro"/>
</dbReference>
<dbReference type="GO" id="GO:0004497">
    <property type="term" value="F:monooxygenase activity"/>
    <property type="evidence" value="ECO:0007669"/>
    <property type="project" value="UniProtKB-KW"/>
</dbReference>
<dbReference type="GO" id="GO:0016705">
    <property type="term" value="F:oxidoreductase activity, acting on paired donors, with incorporation or reduction of molecular oxygen"/>
    <property type="evidence" value="ECO:0007669"/>
    <property type="project" value="InterPro"/>
</dbReference>
<dbReference type="CDD" id="cd11058">
    <property type="entry name" value="CYP60B-like"/>
    <property type="match status" value="1"/>
</dbReference>
<dbReference type="FunFam" id="1.10.630.10:FF:000047">
    <property type="entry name" value="Cytochrome P450 monooxygenase"/>
    <property type="match status" value="1"/>
</dbReference>
<dbReference type="Gene3D" id="1.10.630.10">
    <property type="entry name" value="Cytochrome P450"/>
    <property type="match status" value="1"/>
</dbReference>
<dbReference type="InterPro" id="IPR001128">
    <property type="entry name" value="Cyt_P450"/>
</dbReference>
<dbReference type="InterPro" id="IPR017972">
    <property type="entry name" value="Cyt_P450_CS"/>
</dbReference>
<dbReference type="InterPro" id="IPR002401">
    <property type="entry name" value="Cyt_P450_E_grp-I"/>
</dbReference>
<dbReference type="InterPro" id="IPR036396">
    <property type="entry name" value="Cyt_P450_sf"/>
</dbReference>
<dbReference type="InterPro" id="IPR050121">
    <property type="entry name" value="Cytochrome_P450_monoxygenase"/>
</dbReference>
<dbReference type="PANTHER" id="PTHR24305">
    <property type="entry name" value="CYTOCHROME P450"/>
    <property type="match status" value="1"/>
</dbReference>
<dbReference type="PANTHER" id="PTHR24305:SF230">
    <property type="entry name" value="P450, PUTATIVE (EUROFUNG)-RELATED"/>
    <property type="match status" value="1"/>
</dbReference>
<dbReference type="Pfam" id="PF00067">
    <property type="entry name" value="p450"/>
    <property type="match status" value="1"/>
</dbReference>
<dbReference type="PRINTS" id="PR00463">
    <property type="entry name" value="EP450I"/>
</dbReference>
<dbReference type="PRINTS" id="PR00385">
    <property type="entry name" value="P450"/>
</dbReference>
<dbReference type="SUPFAM" id="SSF48264">
    <property type="entry name" value="Cytochrome P450"/>
    <property type="match status" value="1"/>
</dbReference>
<dbReference type="PROSITE" id="PS00086">
    <property type="entry name" value="CYTOCHROME_P450"/>
    <property type="match status" value="1"/>
</dbReference>
<gene>
    <name evidence="5" type="primary">aclL</name>
    <name type="ORF">AO090001000028</name>
</gene>
<feature type="chain" id="PRO_0000441198" description="Cytochrome P450 monooxygenase aclL">
    <location>
        <begin position="1"/>
        <end position="490"/>
    </location>
</feature>
<feature type="transmembrane region" description="Helical" evidence="2">
    <location>
        <begin position="1"/>
        <end position="21"/>
    </location>
</feature>
<feature type="binding site" description="axial binding residue" evidence="1">
    <location>
        <position position="434"/>
    </location>
    <ligand>
        <name>heme</name>
        <dbReference type="ChEBI" id="CHEBI:30413"/>
    </ligand>
    <ligandPart>
        <name>Fe</name>
        <dbReference type="ChEBI" id="CHEBI:18248"/>
    </ligandPart>
</feature>
<feature type="glycosylation site" description="N-linked (GlcNAc...) asparagine" evidence="3">
    <location>
        <position position="176"/>
    </location>
</feature>
<accession>Q2UPC4</accession>
<comment type="function">
    <text evidence="4">Cytochrome P450 monooxygenase; part of the gene cluster that mediates the biosynthesis of aspirochlorine (or antibiotic A30641), an unusual halogenated spiro compound with distinctive antifungal properties due to selective inhibition of protein biosynthesis, and which is also active against bacteria, viruses, and murine tumor cells (PubMed:25302411). The non-ribosomal peptide synthetase (NRPS) aclP is responsible the formation of the diketopiperazine (DKP) core from the condensation of 2 phenylalanine residues (PubMed:25302411). One Phe residue is tailored into chlorotyrosine by hydroxylation and chlorination, whereas the second Phe undergoes an unprecedented C-C bond cleavage to be converted into glycine (PubMed:25302411). After formation of the DKP, sulfur is incorporated into the DKP by conjugation with glutathione by aclG, followed by its stepwise degradation to the thiol by aclI, aclJ and aclK, and the dithiol oxidation by aclT (PubMed:25302411). In addition, oxygenases (aclB, aclC, aclL and aclO) and O-methyltransferases (aclM and aclU) act as tailoring enzymes to produce the intermediate dechloroaspirochlorine (PubMed:25302411). Ultimately, chlorination of dechloroaspirochlorine by the halogenase aclH is the last step in the aspirochlorine pathway (PubMed:25302411).</text>
</comment>
<comment type="cofactor">
    <cofactor evidence="1">
        <name>heme</name>
        <dbReference type="ChEBI" id="CHEBI:30413"/>
    </cofactor>
</comment>
<comment type="pathway">
    <text evidence="7">Mycotoxin biosynthesis.</text>
</comment>
<comment type="subcellular location">
    <subcellularLocation>
        <location evidence="2">Membrane</location>
        <topology evidence="2">Single-pass membrane protein</topology>
    </subcellularLocation>
</comment>
<comment type="similarity">
    <text evidence="6">Belongs to the cytochrome P450 family.</text>
</comment>
<protein>
    <recommendedName>
        <fullName evidence="5">Cytochrome P450 monooxygenase aclL</fullName>
        <ecNumber evidence="7">1.-.-.-</ecNumber>
    </recommendedName>
    <alternativeName>
        <fullName evidence="5">Aspirochlorine biosynthesis protein L</fullName>
    </alternativeName>
</protein>
<sequence>MLFSLGPLTIVYGLVIFVVAKTIYNLYLHPLRSYPGPLLARATRWYYSYYVKIGLLPQKTKELHDQYGPCVRIAPDELSYNTAEAWEDICGHRTGQRTESFEKDLTFFPPAPNGVDSIVRIDDVHRRFRRLLSHPMSDKALGSQQEIITGYVDQLIHELRQRSERSEVVDMVRWFNFTSFDILGDLAFGESFGCLGSGLMHPWIELIFTSIKSVMDMQIIRRIPGLFSLILTIAGLQQKQDLQEQFMFCQKKARERYTKETTRPDFMTYILRATEEKGMTPEEIEANAQILIMAGSETTASALSGTLFYLLKNSMAMQKLRQEIHATFQAEAEITMRSTQSMEYLHAVLQEAMRVYPPVPCTFPRTTPPGGAMVCGRFVPGGYIVGVNQLAAMTSEKNFKDPLKFIPERWCGDERYQEDSRKAYQPFSYGPRNCLGKNLAYAEMRLVLTRLLWNFEFDLLEESKDWHAKQKVWMMWDKGDLKVRLKPLRH</sequence>